<name>IFA2_CAEEL</name>
<evidence type="ECO:0000255" key="1">
    <source>
        <dbReference type="PROSITE-ProRule" id="PRU01187"/>
    </source>
</evidence>
<evidence type="ECO:0000255" key="2">
    <source>
        <dbReference type="PROSITE-ProRule" id="PRU01188"/>
    </source>
</evidence>
<evidence type="ECO:0000256" key="3">
    <source>
        <dbReference type="SAM" id="MobiDB-lite"/>
    </source>
</evidence>
<evidence type="ECO:0000269" key="4">
    <source>
    </source>
</evidence>
<evidence type="ECO:0000269" key="5">
    <source>
    </source>
</evidence>
<evidence type="ECO:0000269" key="6">
    <source>
    </source>
</evidence>
<evidence type="ECO:0000312" key="7">
    <source>
        <dbReference type="WormBase" id="W10G6.3"/>
    </source>
</evidence>
<dbReference type="EMBL" id="X70835">
    <property type="protein sequence ID" value="CAA50183.1"/>
    <property type="molecule type" value="Genomic_DNA"/>
</dbReference>
<dbReference type="EMBL" id="Z81140">
    <property type="protein sequence ID" value="CAB03486.1"/>
    <property type="molecule type" value="Genomic_DNA"/>
</dbReference>
<dbReference type="PIR" id="T26335">
    <property type="entry name" value="T26335"/>
</dbReference>
<dbReference type="RefSeq" id="NP_510648.1">
    <property type="nucleotide sequence ID" value="NM_078247.9"/>
</dbReference>
<dbReference type="SMR" id="O02365"/>
<dbReference type="BioGRID" id="46584">
    <property type="interactions" value="29"/>
</dbReference>
<dbReference type="DIP" id="DIP-26450N"/>
<dbReference type="FunCoup" id="O02365">
    <property type="interactions" value="10"/>
</dbReference>
<dbReference type="IntAct" id="O02365">
    <property type="interactions" value="9"/>
</dbReference>
<dbReference type="MINT" id="O02365"/>
<dbReference type="STRING" id="6239.W10G6.3.1"/>
<dbReference type="iPTMnet" id="O02365"/>
<dbReference type="PaxDb" id="6239-W10G6.3"/>
<dbReference type="PeptideAtlas" id="O02365"/>
<dbReference type="EnsemblMetazoa" id="W10G6.3.1">
    <property type="protein sequence ID" value="W10G6.3.1"/>
    <property type="gene ID" value="WBGene00003485"/>
</dbReference>
<dbReference type="GeneID" id="181698"/>
<dbReference type="KEGG" id="cel:CELE_W10G6.3"/>
<dbReference type="UCSC" id="W10G6.3.1">
    <property type="organism name" value="c. elegans"/>
</dbReference>
<dbReference type="AGR" id="WB:WBGene00003485"/>
<dbReference type="CTD" id="181698"/>
<dbReference type="WormBase" id="W10G6.3">
    <property type="protein sequence ID" value="CE18354"/>
    <property type="gene ID" value="WBGene00003485"/>
    <property type="gene designation" value="mua-6"/>
</dbReference>
<dbReference type="eggNOG" id="KOG0977">
    <property type="taxonomic scope" value="Eukaryota"/>
</dbReference>
<dbReference type="GeneTree" id="ENSGT00970000196730"/>
<dbReference type="HOGENOM" id="CLU_012560_7_0_1"/>
<dbReference type="InParanoid" id="O02365"/>
<dbReference type="OMA" id="DWYRTKF"/>
<dbReference type="OrthoDB" id="2441647at2759"/>
<dbReference type="PhylomeDB" id="O02365"/>
<dbReference type="Reactome" id="R-CEL-2559584">
    <property type="pathway name" value="Formation of Senescence-Associated Heterochromatin Foci (SAHF)"/>
</dbReference>
<dbReference type="Reactome" id="R-CEL-4419969">
    <property type="pathway name" value="Depolymerization of the Nuclear Lamina"/>
</dbReference>
<dbReference type="Reactome" id="R-CEL-9013405">
    <property type="pathway name" value="RHOD GTPase cycle"/>
</dbReference>
<dbReference type="Reactome" id="R-CEL-9035034">
    <property type="pathway name" value="RHOF GTPase cycle"/>
</dbReference>
<dbReference type="SignaLink" id="O02365"/>
<dbReference type="PRO" id="PR:O02365"/>
<dbReference type="Proteomes" id="UP000001940">
    <property type="component" value="Chromosome X"/>
</dbReference>
<dbReference type="Bgee" id="WBGene00003485">
    <property type="expression patterns" value="Expressed in larva and 4 other cell types or tissues"/>
</dbReference>
<dbReference type="GO" id="GO:0030056">
    <property type="term" value="C:hemidesmosome"/>
    <property type="evidence" value="ECO:0000314"/>
    <property type="project" value="WormBase"/>
</dbReference>
<dbReference type="GO" id="GO:0005882">
    <property type="term" value="C:intermediate filament"/>
    <property type="evidence" value="ECO:0007669"/>
    <property type="project" value="UniProtKB-KW"/>
</dbReference>
<dbReference type="GO" id="GO:0005635">
    <property type="term" value="C:nuclear envelope"/>
    <property type="evidence" value="ECO:0000318"/>
    <property type="project" value="GO_Central"/>
</dbReference>
<dbReference type="GO" id="GO:0005652">
    <property type="term" value="C:nuclear lamina"/>
    <property type="evidence" value="ECO:0000318"/>
    <property type="project" value="GO_Central"/>
</dbReference>
<dbReference type="GO" id="GO:0005200">
    <property type="term" value="F:structural constituent of cytoskeleton"/>
    <property type="evidence" value="ECO:0000318"/>
    <property type="project" value="GO_Central"/>
</dbReference>
<dbReference type="GO" id="GO:0098609">
    <property type="term" value="P:cell-cell adhesion"/>
    <property type="evidence" value="ECO:0000315"/>
    <property type="project" value="WormBase"/>
</dbReference>
<dbReference type="GO" id="GO:0031507">
    <property type="term" value="P:heterochromatin formation"/>
    <property type="evidence" value="ECO:0000318"/>
    <property type="project" value="GO_Central"/>
</dbReference>
<dbReference type="GO" id="GO:0006998">
    <property type="term" value="P:nuclear envelope organization"/>
    <property type="evidence" value="ECO:0000318"/>
    <property type="project" value="GO_Central"/>
</dbReference>
<dbReference type="GO" id="GO:0007097">
    <property type="term" value="P:nuclear migration"/>
    <property type="evidence" value="ECO:0000318"/>
    <property type="project" value="GO_Central"/>
</dbReference>
<dbReference type="GO" id="GO:0051664">
    <property type="term" value="P:nuclear pore localization"/>
    <property type="evidence" value="ECO:0000318"/>
    <property type="project" value="GO_Central"/>
</dbReference>
<dbReference type="GO" id="GO:0090435">
    <property type="term" value="P:protein localization to nuclear envelope"/>
    <property type="evidence" value="ECO:0000318"/>
    <property type="project" value="GO_Central"/>
</dbReference>
<dbReference type="FunFam" id="1.20.5.1160:FF:000016">
    <property type="entry name" value="Intermediate filament protein A"/>
    <property type="match status" value="1"/>
</dbReference>
<dbReference type="FunFam" id="2.60.40.1260:FF:000003">
    <property type="entry name" value="Intermediate filament protein A"/>
    <property type="match status" value="1"/>
</dbReference>
<dbReference type="FunFam" id="1.20.5.170:FF:000058">
    <property type="entry name" value="Intermediate filament protein B"/>
    <property type="match status" value="1"/>
</dbReference>
<dbReference type="Gene3D" id="1.20.5.170">
    <property type="match status" value="1"/>
</dbReference>
<dbReference type="Gene3D" id="2.60.40.1260">
    <property type="entry name" value="Lamin Tail domain"/>
    <property type="match status" value="1"/>
</dbReference>
<dbReference type="Gene3D" id="1.20.5.500">
    <property type="entry name" value="Single helix bin"/>
    <property type="match status" value="1"/>
</dbReference>
<dbReference type="Gene3D" id="1.20.5.1160">
    <property type="entry name" value="Vasodilator-stimulated phosphoprotein"/>
    <property type="match status" value="1"/>
</dbReference>
<dbReference type="InterPro" id="IPR039008">
    <property type="entry name" value="IF_rod_dom"/>
</dbReference>
<dbReference type="InterPro" id="IPR016451">
    <property type="entry name" value="Intermed_filament_ifa/ifb"/>
</dbReference>
<dbReference type="InterPro" id="IPR001322">
    <property type="entry name" value="Lamin_tail_dom"/>
</dbReference>
<dbReference type="InterPro" id="IPR036415">
    <property type="entry name" value="Lamin_tail_dom_sf"/>
</dbReference>
<dbReference type="PANTHER" id="PTHR45721:SF9">
    <property type="entry name" value="INTERMEDIATE FILAMENT PROTEIN IFA-2-RELATED"/>
    <property type="match status" value="1"/>
</dbReference>
<dbReference type="PANTHER" id="PTHR45721">
    <property type="entry name" value="LAMIN DM0-RELATED"/>
    <property type="match status" value="1"/>
</dbReference>
<dbReference type="Pfam" id="PF00038">
    <property type="entry name" value="Filament"/>
    <property type="match status" value="1"/>
</dbReference>
<dbReference type="PIRSF" id="PIRSF005546">
    <property type="entry name" value="Intermed_filamnt_Ifb-2"/>
    <property type="match status" value="1"/>
</dbReference>
<dbReference type="SMART" id="SM01391">
    <property type="entry name" value="Filament"/>
    <property type="match status" value="1"/>
</dbReference>
<dbReference type="SUPFAM" id="SSF64593">
    <property type="entry name" value="Intermediate filament protein, coiled coil region"/>
    <property type="match status" value="2"/>
</dbReference>
<dbReference type="SUPFAM" id="SSF74853">
    <property type="entry name" value="Lamin A/C globular tail domain"/>
    <property type="match status" value="1"/>
</dbReference>
<dbReference type="PROSITE" id="PS51842">
    <property type="entry name" value="IF_ROD_2"/>
    <property type="match status" value="1"/>
</dbReference>
<dbReference type="PROSITE" id="PS51841">
    <property type="entry name" value="LTD"/>
    <property type="match status" value="1"/>
</dbReference>
<proteinExistence type="evidence at protein level"/>
<feature type="chain" id="PRO_0000063835" description="Intermediate filament protein ifa-2">
    <location>
        <begin position="1"/>
        <end position="581"/>
    </location>
</feature>
<feature type="domain" description="IF rod" evidence="2">
    <location>
        <begin position="71"/>
        <end position="424"/>
    </location>
</feature>
<feature type="domain" description="LTD" evidence="1">
    <location>
        <begin position="457"/>
        <end position="574"/>
    </location>
</feature>
<feature type="region of interest" description="Head">
    <location>
        <begin position="1"/>
        <end position="74"/>
    </location>
</feature>
<feature type="region of interest" description="Disordered" evidence="3">
    <location>
        <begin position="1"/>
        <end position="35"/>
    </location>
</feature>
<feature type="region of interest" description="Disordered" evidence="3">
    <location>
        <begin position="47"/>
        <end position="68"/>
    </location>
</feature>
<feature type="region of interest" description="Coil 1A">
    <location>
        <begin position="75"/>
        <end position="106"/>
    </location>
</feature>
<feature type="region of interest" description="Linker 1">
    <location>
        <begin position="107"/>
        <end position="120"/>
    </location>
</feature>
<feature type="region of interest" description="Coil 1B">
    <location>
        <begin position="121"/>
        <end position="258"/>
    </location>
</feature>
<feature type="region of interest" description="Linker 12">
    <location>
        <begin position="259"/>
        <end position="276"/>
    </location>
</feature>
<feature type="region of interest" description="Coil 2">
    <location>
        <begin position="277"/>
        <end position="424"/>
    </location>
</feature>
<feature type="region of interest" description="Tail">
    <location>
        <begin position="425"/>
        <end position="578"/>
    </location>
</feature>
<feature type="region of interest" description="Disordered" evidence="3">
    <location>
        <begin position="449"/>
        <end position="469"/>
    </location>
</feature>
<feature type="compositionally biased region" description="Polar residues" evidence="3">
    <location>
        <begin position="7"/>
        <end position="28"/>
    </location>
</feature>
<protein>
    <recommendedName>
        <fullName>Intermediate filament protein ifa-2</fullName>
    </recommendedName>
    <alternativeName>
        <fullName>Cel IF A2</fullName>
    </alternativeName>
    <alternativeName>
        <fullName>Intermediate filament protein A2</fullName>
        <shortName>IF-A2</shortName>
    </alternativeName>
</protein>
<accession>O02365</accession>
<organism>
    <name type="scientific">Caenorhabditis elegans</name>
    <dbReference type="NCBI Taxonomy" id="6239"/>
    <lineage>
        <taxon>Eukaryota</taxon>
        <taxon>Metazoa</taxon>
        <taxon>Ecdysozoa</taxon>
        <taxon>Nematoda</taxon>
        <taxon>Chromadorea</taxon>
        <taxon>Rhabditida</taxon>
        <taxon>Rhabditina</taxon>
        <taxon>Rhabditomorpha</taxon>
        <taxon>Rhabditoidea</taxon>
        <taxon>Rhabditidae</taxon>
        <taxon>Peloderinae</taxon>
        <taxon>Caenorhabditis</taxon>
    </lineage>
</organism>
<sequence length="581" mass="67094">MTDPDSYRSSITSRPSFNRTVTSSSQNYGAPGSGNRVLKIVTETHSSSVSSGLSPYGQNAASTIRDNREREKKEIMELNDRLASYIEKVRFLDAQNRKLDADLKMLQGRFGKSTGSVKVMYEMEITTATNVVKQTGKDHGETEKEIRKLQDQLDELRKKFEEAQRGRAEDRLKIDDLLVTLSNLEAEINLLKRRIALLEEEVARLKKENFRLTSELQRVRIELDQETLLRIDNQNKVKTILEEIDFMKRGFETELKELQAQAARDTTSENREYFKNELANAMRDIRAEYDQIMNGNRNDMESWYQLRVQEINTQSNRQNAENNYQKEEVKRLRNQTSELRQKLSDLESRNLLLEKQIEDLNYQLEDDQRSYEAALNDKDAQIRKLREECQALMVELQMLLDTKQTLDGELKVYRQMLEGNSEGNGLRQLVEKVVRTSAINEEADTETMRVVKGEHSSRTSYQRSAKGNVAIKETSPEGKFVILENTHRAKEEPLGDWKLKRKIDGKREIVFTFPSDYILHPFQSVKIFARGQGIANPPEVLIFEGDETFGVGANVQTILYNNKGEERATHIQRQSQQTTSS</sequence>
<reference key="1">
    <citation type="journal article" date="1994" name="EMBO J.">
        <title>Eight genes and alternative RNA processing pathways generate an unexpectedly large diversity of cytoplasmic intermediate filament proteins in the nematode Caenorhabditis elegans.</title>
        <authorList>
            <person name="Dodemont H."/>
            <person name="Riemer D."/>
            <person name="Ledger T.N."/>
            <person name="Weber K."/>
        </authorList>
    </citation>
    <scope>NUCLEOTIDE SEQUENCE [GENOMIC DNA]</scope>
    <source>
        <strain>Bristol N2</strain>
    </source>
</reference>
<reference key="2">
    <citation type="journal article" date="1998" name="Science">
        <title>Genome sequence of the nematode C. elegans: a platform for investigating biology.</title>
        <authorList>
            <consortium name="The C. elegans sequencing consortium"/>
        </authorList>
    </citation>
    <scope>NUCLEOTIDE SEQUENCE [LARGE SCALE GENOMIC DNA]</scope>
    <source>
        <strain>Bristol N2</strain>
    </source>
</reference>
<reference key="3">
    <citation type="journal article" date="2001" name="Proc. Natl. Acad. Sci. U.S.A.">
        <title>Essential roles for four cytoplasmic intermediate filament proteins in Caenorhabditis elegans development.</title>
        <authorList>
            <person name="Karabinos A."/>
            <person name="Schmidt H."/>
            <person name="Harborth J."/>
            <person name="Schnabel R."/>
            <person name="Weber K."/>
        </authorList>
    </citation>
    <scope>FUNCTION</scope>
</reference>
<reference key="4">
    <citation type="journal article" date="2002" name="Mech. Dev.">
        <title>Expression profiles of the essential intermediate filament (IF) protein A2 and the IF protein C2 in the nematode Caenorhabditis elegans.</title>
        <authorList>
            <person name="Karabinos A."/>
            <person name="Schulze E."/>
            <person name="Klisch T."/>
            <person name="Wang J."/>
            <person name="Weber K."/>
        </authorList>
    </citation>
    <scope>TISSUE SPECIFICITY</scope>
    <scope>DEVELOPMENTAL STAGE</scope>
</reference>
<reference key="5">
    <citation type="journal article" date="2003" name="Dev. Biol.">
        <title>mua-6, a gene required for tissue integrity in Caenorhabditis elegans, encodes a cytoplasmic intermediate filament.</title>
        <authorList>
            <person name="Hapiak V."/>
            <person name="Hresko M.C."/>
            <person name="Schriefer L.A."/>
            <person name="Saiyasisongkhram K."/>
            <person name="Bercher M."/>
            <person name="Plenefisch J."/>
        </authorList>
    </citation>
    <scope>FUNCTION</scope>
    <scope>SUBCELLULAR LOCATION</scope>
    <scope>TISSUE SPECIFICITY</scope>
    <scope>DEVELOPMENTAL STAGE</scope>
</reference>
<reference key="6">
    <citation type="journal article" date="2003" name="J. Mol. Biol.">
        <title>In vivo and in vitro evidence that the four essential intermediate filament (IF) proteins A1, A2, A3 and B1 of the nematode Caenorhabditis elegans form an obligate heteropolymeric IF system.</title>
        <authorList>
            <person name="Karabinos A."/>
            <person name="Schulze E."/>
            <person name="Schuenemann J."/>
            <person name="Parry D.A.D."/>
            <person name="Weber K."/>
        </authorList>
    </citation>
    <scope>INTERACTION WITH IFB-1</scope>
</reference>
<comment type="function">
    <text evidence="4 6">Cytoplasmic intermediate filaments provide mechanical strength to cells. Essential protein, involved in attachment structures in epidermal cells that connect muscles to the external cuticle. Probably acts by forming hypodermal hemidesmosome complexes that help mediate muscle-cuticle force transduction. Although expressed during embryogenesis, it is not required for embryonic development of muscle-cuticle linkages nor for the localization of other proteins to the hemidesmosomes in embryos.</text>
</comment>
<comment type="subunit">
    <text>Forms some heteromeric filaments with ifb-1.</text>
</comment>
<comment type="subcellular location">
    <subcellularLocation>
        <location evidence="6">Cell junction</location>
        <location evidence="6">Hemidesmosome</location>
    </subcellularLocation>
    <text>Colocalizes with myoactin.</text>
</comment>
<comment type="tissue specificity">
    <text evidence="5 6">Mainly expressed in regions of the hypodermis adjacent to muscle. Expressed in longitudinal stripes where the mechanosensory neurons interface with the hypodermis. Also expressed to the uterine seam and within the uterine-vulval cells.</text>
</comment>
<comment type="developmental stage">
    <text evidence="5 6">First expressed in embryos that are starting to elongate, before hemidesmosomes-associated filaments are recruited to regions of the hypodermis adjacent to muscle. Expressed throughout larval stages and in adults.</text>
</comment>
<comment type="similarity">
    <text evidence="2">Belongs to the intermediate filament family.</text>
</comment>
<keyword id="KW-0965">Cell junction</keyword>
<keyword id="KW-0175">Coiled coil</keyword>
<keyword id="KW-0403">Intermediate filament</keyword>
<keyword id="KW-1185">Reference proteome</keyword>
<gene>
    <name evidence="7" type="primary">mua-6</name>
    <name evidence="7" type="synonym">ifa-2</name>
    <name evidence="7" type="ORF">W10G6.3</name>
</gene>